<protein>
    <recommendedName>
        <fullName>Zinc finger MYND domain-containing protein 19</fullName>
    </recommendedName>
    <alternativeName>
        <fullName>Melanin-concentrating hormone receptor 1-interacting zinc finger protein</fullName>
        <shortName>MCH-R1-interacting zinc finger protein</shortName>
    </alternativeName>
</protein>
<name>ZMY19_RAT</name>
<organism>
    <name type="scientific">Rattus norvegicus</name>
    <name type="common">Rat</name>
    <dbReference type="NCBI Taxonomy" id="10116"/>
    <lineage>
        <taxon>Eukaryota</taxon>
        <taxon>Metazoa</taxon>
        <taxon>Chordata</taxon>
        <taxon>Craniata</taxon>
        <taxon>Vertebrata</taxon>
        <taxon>Euteleostomi</taxon>
        <taxon>Mammalia</taxon>
        <taxon>Eutheria</taxon>
        <taxon>Euarchontoglires</taxon>
        <taxon>Glires</taxon>
        <taxon>Rodentia</taxon>
        <taxon>Myomorpha</taxon>
        <taxon>Muroidea</taxon>
        <taxon>Muridae</taxon>
        <taxon>Murinae</taxon>
        <taxon>Rattus</taxon>
    </lineage>
</organism>
<reference key="1">
    <citation type="journal article" date="2002" name="FEBS Lett.">
        <title>MIZIP, a highly conserved, vertebrate specific melanin-concentrating hormone receptor 1 interacting zinc-finger protein.</title>
        <authorList>
            <person name="Baechner D."/>
            <person name="Kreienkamp H.-J."/>
            <person name="Richter D."/>
        </authorList>
    </citation>
    <scope>NUCLEOTIDE SEQUENCE [MRNA]</scope>
    <source>
        <strain>Wistar</strain>
        <tissue>Brain</tissue>
    </source>
</reference>
<reference key="2">
    <citation type="journal article" date="2004" name="Genome Res.">
        <title>The status, quality, and expansion of the NIH full-length cDNA project: the Mammalian Gene Collection (MGC).</title>
        <authorList>
            <consortium name="The MGC Project Team"/>
        </authorList>
    </citation>
    <scope>NUCLEOTIDE SEQUENCE [LARGE SCALE MRNA]</scope>
    <source>
        <tissue>Spleen</tissue>
    </source>
</reference>
<dbReference type="EMBL" id="AJ488144">
    <property type="protein sequence ID" value="CAD32374.1"/>
    <property type="molecule type" value="mRNA"/>
</dbReference>
<dbReference type="EMBL" id="BC088093">
    <property type="protein sequence ID" value="AAH88093.1"/>
    <property type="molecule type" value="mRNA"/>
</dbReference>
<dbReference type="RefSeq" id="NP_942065.1">
    <property type="nucleotide sequence ID" value="NM_198770.3"/>
</dbReference>
<dbReference type="SMR" id="Q7TSV3"/>
<dbReference type="FunCoup" id="Q7TSV3">
    <property type="interactions" value="1269"/>
</dbReference>
<dbReference type="STRING" id="10116.ENSRNOP00000010270"/>
<dbReference type="PhosphoSitePlus" id="Q7TSV3"/>
<dbReference type="PaxDb" id="10116-ENSRNOP00000010270"/>
<dbReference type="Ensembl" id="ENSRNOT00000010270.8">
    <property type="protein sequence ID" value="ENSRNOP00000010270.5"/>
    <property type="gene ID" value="ENSRNOG00000007752.8"/>
</dbReference>
<dbReference type="GeneID" id="311791"/>
<dbReference type="KEGG" id="rno:311791"/>
<dbReference type="UCSC" id="RGD:735079">
    <property type="organism name" value="rat"/>
</dbReference>
<dbReference type="AGR" id="RGD:735079"/>
<dbReference type="CTD" id="116225"/>
<dbReference type="RGD" id="735079">
    <property type="gene designation" value="Zmynd19"/>
</dbReference>
<dbReference type="eggNOG" id="ENOG502QUSS">
    <property type="taxonomic scope" value="Eukaryota"/>
</dbReference>
<dbReference type="GeneTree" id="ENSGT00940000153820"/>
<dbReference type="HOGENOM" id="CLU_084232_0_0_1"/>
<dbReference type="InParanoid" id="Q7TSV3"/>
<dbReference type="OMA" id="FYECHYP"/>
<dbReference type="OrthoDB" id="2951111at2759"/>
<dbReference type="PhylomeDB" id="Q7TSV3"/>
<dbReference type="TreeFam" id="TF329209"/>
<dbReference type="PRO" id="PR:Q7TSV3"/>
<dbReference type="Proteomes" id="UP000002494">
    <property type="component" value="Chromosome 3"/>
</dbReference>
<dbReference type="Bgee" id="ENSRNOG00000007752">
    <property type="expression patterns" value="Expressed in quadriceps femoris and 19 other cell types or tissues"/>
</dbReference>
<dbReference type="GO" id="GO:0005737">
    <property type="term" value="C:cytoplasm"/>
    <property type="evidence" value="ECO:0000266"/>
    <property type="project" value="RGD"/>
</dbReference>
<dbReference type="GO" id="GO:0016020">
    <property type="term" value="C:membrane"/>
    <property type="evidence" value="ECO:0000266"/>
    <property type="project" value="RGD"/>
</dbReference>
<dbReference type="GO" id="GO:0005886">
    <property type="term" value="C:plasma membrane"/>
    <property type="evidence" value="ECO:0007669"/>
    <property type="project" value="UniProtKB-SubCell"/>
</dbReference>
<dbReference type="GO" id="GO:0045202">
    <property type="term" value="C:synapse"/>
    <property type="evidence" value="ECO:0000266"/>
    <property type="project" value="RGD"/>
</dbReference>
<dbReference type="GO" id="GO:0008270">
    <property type="term" value="F:zinc ion binding"/>
    <property type="evidence" value="ECO:0007669"/>
    <property type="project" value="UniProtKB-KW"/>
</dbReference>
<dbReference type="FunFam" id="6.10.140.2220:FF:000007">
    <property type="entry name" value="Zinc finger MYND domain-containing protein 19"/>
    <property type="match status" value="1"/>
</dbReference>
<dbReference type="Gene3D" id="6.10.140.2220">
    <property type="match status" value="1"/>
</dbReference>
<dbReference type="InterPro" id="IPR044925">
    <property type="entry name" value="His-Me_finger_sf"/>
</dbReference>
<dbReference type="InterPro" id="IPR003615">
    <property type="entry name" value="HNH_nuc"/>
</dbReference>
<dbReference type="InterPro" id="IPR032978">
    <property type="entry name" value="ZMYND19"/>
</dbReference>
<dbReference type="InterPro" id="IPR002893">
    <property type="entry name" value="Znf_MYND"/>
</dbReference>
<dbReference type="PANTHER" id="PTHR46831">
    <property type="entry name" value="ZINC FINGER MYND DOMAIN-CONTAINING PROTEIN 19"/>
    <property type="match status" value="1"/>
</dbReference>
<dbReference type="PANTHER" id="PTHR46831:SF1">
    <property type="entry name" value="ZINC FINGER MYND DOMAIN-CONTAINING PROTEIN 19"/>
    <property type="match status" value="1"/>
</dbReference>
<dbReference type="Pfam" id="PF13392">
    <property type="entry name" value="HNH_3"/>
    <property type="match status" value="1"/>
</dbReference>
<dbReference type="Pfam" id="PF01753">
    <property type="entry name" value="zf-MYND"/>
    <property type="match status" value="1"/>
</dbReference>
<dbReference type="SUPFAM" id="SSF54060">
    <property type="entry name" value="His-Me finger endonucleases"/>
    <property type="match status" value="1"/>
</dbReference>
<dbReference type="SUPFAM" id="SSF144232">
    <property type="entry name" value="HIT/MYND zinc finger-like"/>
    <property type="match status" value="1"/>
</dbReference>
<dbReference type="PROSITE" id="PS01360">
    <property type="entry name" value="ZF_MYND_1"/>
    <property type="match status" value="1"/>
</dbReference>
<dbReference type="PROSITE" id="PS50865">
    <property type="entry name" value="ZF_MYND_2"/>
    <property type="match status" value="1"/>
</dbReference>
<accession>Q7TSV3</accession>
<proteinExistence type="evidence at transcript level"/>
<comment type="function">
    <text>May be involved as a regulatory molecule in GPR24/MCH-R1 signaling.</text>
</comment>
<comment type="subunit">
    <text evidence="1">Interacts with GPR24/MCH-R1.</text>
</comment>
<comment type="subcellular location">
    <subcellularLocation>
        <location evidence="1">Cytoplasm</location>
    </subcellularLocation>
    <subcellularLocation>
        <location evidence="1">Cell membrane</location>
        <topology evidence="1">Peripheral membrane protein</topology>
    </subcellularLocation>
</comment>
<sequence>MTDFKLGIVRLGRVAGKTKYTLIDEQDIPLVESYSFEARMEVDADGNGAKIFAYAFDKNRGRGSGRLLHELLWERHRGGVAPGFQVVHLNAVTVDNRLDNLQLVPWGWRPKAEETSSKQREQSLYWLAIQQLPTDPIEEQFPVLNVTRYYNANGDVVEEEENSCTYYECHYPPCTVIEKQLREFNICGRCQVARYCGSQCQQKDWPAHKKHCRERKRPFQHELEPER</sequence>
<gene>
    <name type="primary">Zmynd19</name>
    <name type="synonym">Mizip</name>
</gene>
<evidence type="ECO:0000250" key="1"/>
<evidence type="ECO:0000255" key="2">
    <source>
        <dbReference type="PROSITE-ProRule" id="PRU00134"/>
    </source>
</evidence>
<keyword id="KW-1003">Cell membrane</keyword>
<keyword id="KW-0963">Cytoplasm</keyword>
<keyword id="KW-0472">Membrane</keyword>
<keyword id="KW-0479">Metal-binding</keyword>
<keyword id="KW-1185">Reference proteome</keyword>
<keyword id="KW-0862">Zinc</keyword>
<keyword id="KW-0863">Zinc-finger</keyword>
<feature type="chain" id="PRO_0000218321" description="Zinc finger MYND domain-containing protein 19">
    <location>
        <begin position="1"/>
        <end position="227"/>
    </location>
</feature>
<feature type="zinc finger region" description="MYND-type; degenerate" evidence="2">
    <location>
        <begin position="174"/>
        <end position="212"/>
    </location>
</feature>
<feature type="binding site" evidence="2">
    <location>
        <position position="187"/>
    </location>
    <ligand>
        <name>Zn(2+)</name>
        <dbReference type="ChEBI" id="CHEBI:29105"/>
    </ligand>
</feature>
<feature type="binding site" evidence="2">
    <location>
        <position position="190"/>
    </location>
    <ligand>
        <name>Zn(2+)</name>
        <dbReference type="ChEBI" id="CHEBI:29105"/>
    </ligand>
</feature>
<feature type="binding site" evidence="2">
    <location>
        <position position="208"/>
    </location>
    <ligand>
        <name>Zn(2+)</name>
        <dbReference type="ChEBI" id="CHEBI:29105"/>
    </ligand>
</feature>
<feature type="binding site" evidence="2">
    <location>
        <position position="212"/>
    </location>
    <ligand>
        <name>Zn(2+)</name>
        <dbReference type="ChEBI" id="CHEBI:29105"/>
    </ligand>
</feature>